<keyword id="KW-0004">4Fe-4S</keyword>
<keyword id="KW-0997">Cell inner membrane</keyword>
<keyword id="KW-1003">Cell membrane</keyword>
<keyword id="KW-0408">Iron</keyword>
<keyword id="KW-0411">Iron-sulfur</keyword>
<keyword id="KW-0472">Membrane</keyword>
<keyword id="KW-0479">Metal-binding</keyword>
<keyword id="KW-0520">NAD</keyword>
<keyword id="KW-0874">Quinone</keyword>
<keyword id="KW-1278">Translocase</keyword>
<keyword id="KW-0813">Transport</keyword>
<keyword id="KW-0830">Ubiquinone</keyword>
<proteinExistence type="inferred from homology"/>
<protein>
    <recommendedName>
        <fullName evidence="2">NADH-quinone oxidoreductase subunit B 1</fullName>
        <ecNumber evidence="2">7.1.1.-</ecNumber>
    </recommendedName>
    <alternativeName>
        <fullName evidence="2">NADH dehydrogenase I subunit B 1</fullName>
    </alternativeName>
    <alternativeName>
        <fullName evidence="2">NDH-1 subunit B 1</fullName>
    </alternativeName>
</protein>
<dbReference type="EC" id="7.1.1.-" evidence="2"/>
<dbReference type="EMBL" id="CP000572">
    <property type="protein sequence ID" value="ABN89021.1"/>
    <property type="molecule type" value="Genomic_DNA"/>
</dbReference>
<dbReference type="RefSeq" id="WP_004186402.1">
    <property type="nucleotide sequence ID" value="NC_009076.1"/>
</dbReference>
<dbReference type="SMR" id="A3NTA7"/>
<dbReference type="KEGG" id="bpl:BURPS1106A_1300"/>
<dbReference type="HOGENOM" id="CLU_055737_7_3_4"/>
<dbReference type="Proteomes" id="UP000006738">
    <property type="component" value="Chromosome I"/>
</dbReference>
<dbReference type="GO" id="GO:0005886">
    <property type="term" value="C:plasma membrane"/>
    <property type="evidence" value="ECO:0007669"/>
    <property type="project" value="UniProtKB-SubCell"/>
</dbReference>
<dbReference type="GO" id="GO:0045271">
    <property type="term" value="C:respiratory chain complex I"/>
    <property type="evidence" value="ECO:0007669"/>
    <property type="project" value="TreeGrafter"/>
</dbReference>
<dbReference type="GO" id="GO:0051539">
    <property type="term" value="F:4 iron, 4 sulfur cluster binding"/>
    <property type="evidence" value="ECO:0007669"/>
    <property type="project" value="UniProtKB-KW"/>
</dbReference>
<dbReference type="GO" id="GO:0005506">
    <property type="term" value="F:iron ion binding"/>
    <property type="evidence" value="ECO:0007669"/>
    <property type="project" value="UniProtKB-UniRule"/>
</dbReference>
<dbReference type="GO" id="GO:0008137">
    <property type="term" value="F:NADH dehydrogenase (ubiquinone) activity"/>
    <property type="evidence" value="ECO:0007669"/>
    <property type="project" value="InterPro"/>
</dbReference>
<dbReference type="GO" id="GO:0050136">
    <property type="term" value="F:NADH:ubiquinone reductase (non-electrogenic) activity"/>
    <property type="evidence" value="ECO:0007669"/>
    <property type="project" value="UniProtKB-UniRule"/>
</dbReference>
<dbReference type="GO" id="GO:0048038">
    <property type="term" value="F:quinone binding"/>
    <property type="evidence" value="ECO:0007669"/>
    <property type="project" value="UniProtKB-KW"/>
</dbReference>
<dbReference type="GO" id="GO:0009060">
    <property type="term" value="P:aerobic respiration"/>
    <property type="evidence" value="ECO:0007669"/>
    <property type="project" value="TreeGrafter"/>
</dbReference>
<dbReference type="GO" id="GO:0015990">
    <property type="term" value="P:electron transport coupled proton transport"/>
    <property type="evidence" value="ECO:0007669"/>
    <property type="project" value="TreeGrafter"/>
</dbReference>
<dbReference type="FunFam" id="3.40.50.12280:FF:000001">
    <property type="entry name" value="NADH-quinone oxidoreductase subunit B 2"/>
    <property type="match status" value="1"/>
</dbReference>
<dbReference type="Gene3D" id="3.40.50.12280">
    <property type="match status" value="1"/>
</dbReference>
<dbReference type="HAMAP" id="MF_01356">
    <property type="entry name" value="NDH1_NuoB"/>
    <property type="match status" value="1"/>
</dbReference>
<dbReference type="InterPro" id="IPR006137">
    <property type="entry name" value="NADH_UbQ_OxRdtase-like_20kDa"/>
</dbReference>
<dbReference type="InterPro" id="IPR006138">
    <property type="entry name" value="NADH_UQ_OxRdtase_20Kd_su"/>
</dbReference>
<dbReference type="NCBIfam" id="TIGR01957">
    <property type="entry name" value="nuoB_fam"/>
    <property type="match status" value="1"/>
</dbReference>
<dbReference type="NCBIfam" id="NF005012">
    <property type="entry name" value="PRK06411.1"/>
    <property type="match status" value="1"/>
</dbReference>
<dbReference type="PANTHER" id="PTHR11995">
    <property type="entry name" value="NADH DEHYDROGENASE"/>
    <property type="match status" value="1"/>
</dbReference>
<dbReference type="PANTHER" id="PTHR11995:SF14">
    <property type="entry name" value="NADH DEHYDROGENASE [UBIQUINONE] IRON-SULFUR PROTEIN 7, MITOCHONDRIAL"/>
    <property type="match status" value="1"/>
</dbReference>
<dbReference type="Pfam" id="PF01058">
    <property type="entry name" value="Oxidored_q6"/>
    <property type="match status" value="1"/>
</dbReference>
<dbReference type="SUPFAM" id="SSF56770">
    <property type="entry name" value="HydA/Nqo6-like"/>
    <property type="match status" value="1"/>
</dbReference>
<dbReference type="PROSITE" id="PS01150">
    <property type="entry name" value="COMPLEX1_20K"/>
    <property type="match status" value="1"/>
</dbReference>
<name>NUOB1_BURP0</name>
<evidence type="ECO:0000250" key="1"/>
<evidence type="ECO:0000255" key="2">
    <source>
        <dbReference type="HAMAP-Rule" id="MF_01356"/>
    </source>
</evidence>
<organism>
    <name type="scientific">Burkholderia pseudomallei (strain 1106a)</name>
    <dbReference type="NCBI Taxonomy" id="357348"/>
    <lineage>
        <taxon>Bacteria</taxon>
        <taxon>Pseudomonadati</taxon>
        <taxon>Pseudomonadota</taxon>
        <taxon>Betaproteobacteria</taxon>
        <taxon>Burkholderiales</taxon>
        <taxon>Burkholderiaceae</taxon>
        <taxon>Burkholderia</taxon>
        <taxon>pseudomallei group</taxon>
    </lineage>
</organism>
<reference key="1">
    <citation type="journal article" date="2010" name="Genome Biol. Evol.">
        <title>Continuing evolution of Burkholderia mallei through genome reduction and large-scale rearrangements.</title>
        <authorList>
            <person name="Losada L."/>
            <person name="Ronning C.M."/>
            <person name="DeShazer D."/>
            <person name="Woods D."/>
            <person name="Fedorova N."/>
            <person name="Kim H.S."/>
            <person name="Shabalina S.A."/>
            <person name="Pearson T.R."/>
            <person name="Brinkac L."/>
            <person name="Tan P."/>
            <person name="Nandi T."/>
            <person name="Crabtree J."/>
            <person name="Badger J."/>
            <person name="Beckstrom-Sternberg S."/>
            <person name="Saqib M."/>
            <person name="Schutzer S.E."/>
            <person name="Keim P."/>
            <person name="Nierman W.C."/>
        </authorList>
    </citation>
    <scope>NUCLEOTIDE SEQUENCE [LARGE SCALE GENOMIC DNA]</scope>
    <source>
        <strain>1106a</strain>
    </source>
</reference>
<sequence>MSIEGVLKEGFVTTTADKLINWTRTGSLWPMTFGLACCAVEMMHAGAARYDLDRFGVVFRPSPRQSDVMIVAGTLCNKMAPALRRVYDQMAEPRWVISMGSCANGGGYYHYSYSVVRGCDRIVPVDVYVPGCPPTAEALVYGVIQLQAKIRRTSTIARQ</sequence>
<gene>
    <name evidence="2" type="primary">nuoB1</name>
    <name type="ordered locus">BURPS1106A_1300</name>
</gene>
<feature type="chain" id="PRO_0000358382" description="NADH-quinone oxidoreductase subunit B 1">
    <location>
        <begin position="1"/>
        <end position="159"/>
    </location>
</feature>
<feature type="binding site" evidence="2">
    <location>
        <position position="37"/>
    </location>
    <ligand>
        <name>[4Fe-4S] cluster</name>
        <dbReference type="ChEBI" id="CHEBI:49883"/>
    </ligand>
</feature>
<feature type="binding site" evidence="2">
    <location>
        <position position="38"/>
    </location>
    <ligand>
        <name>[4Fe-4S] cluster</name>
        <dbReference type="ChEBI" id="CHEBI:49883"/>
    </ligand>
</feature>
<feature type="binding site" evidence="2">
    <location>
        <position position="102"/>
    </location>
    <ligand>
        <name>[4Fe-4S] cluster</name>
        <dbReference type="ChEBI" id="CHEBI:49883"/>
    </ligand>
</feature>
<feature type="binding site" evidence="2">
    <location>
        <position position="132"/>
    </location>
    <ligand>
        <name>[4Fe-4S] cluster</name>
        <dbReference type="ChEBI" id="CHEBI:49883"/>
    </ligand>
</feature>
<comment type="function">
    <text evidence="1">NDH-1 shuttles electrons from NADH, via FMN and iron-sulfur (Fe-S) centers, to quinones in the respiratory chain. Couples the redox reaction to proton translocation (for every two electrons transferred, four hydrogen ions are translocated across the cytoplasmic membrane), and thus conserves the redox energy in a proton gradient (By similarity).</text>
</comment>
<comment type="catalytic activity">
    <reaction evidence="2">
        <text>a quinone + NADH + 5 H(+)(in) = a quinol + NAD(+) + 4 H(+)(out)</text>
        <dbReference type="Rhea" id="RHEA:57888"/>
        <dbReference type="ChEBI" id="CHEBI:15378"/>
        <dbReference type="ChEBI" id="CHEBI:24646"/>
        <dbReference type="ChEBI" id="CHEBI:57540"/>
        <dbReference type="ChEBI" id="CHEBI:57945"/>
        <dbReference type="ChEBI" id="CHEBI:132124"/>
    </reaction>
</comment>
<comment type="cofactor">
    <cofactor evidence="2">
        <name>[4Fe-4S] cluster</name>
        <dbReference type="ChEBI" id="CHEBI:49883"/>
    </cofactor>
    <text evidence="2">Binds 1 [4Fe-4S] cluster.</text>
</comment>
<comment type="subunit">
    <text evidence="2">NDH-1 is composed of 14 different subunits. Subunits NuoB, C, D, E, F, and G constitute the peripheral sector of the complex.</text>
</comment>
<comment type="subcellular location">
    <subcellularLocation>
        <location evidence="2">Cell inner membrane</location>
        <topology evidence="2">Peripheral membrane protein</topology>
        <orientation evidence="2">Cytoplasmic side</orientation>
    </subcellularLocation>
</comment>
<comment type="similarity">
    <text evidence="2">Belongs to the complex I 20 kDa subunit family.</text>
</comment>
<accession>A3NTA7</accession>